<keyword id="KW-1185">Reference proteome</keyword>
<keyword id="KW-0687">Ribonucleoprotein</keyword>
<keyword id="KW-0689">Ribosomal protein</keyword>
<feature type="chain" id="PRO_0000104614" description="Large ribosomal subunit protein uL30">
    <location>
        <begin position="1"/>
        <end position="60"/>
    </location>
</feature>
<proteinExistence type="inferred from homology"/>
<name>RL30_STRCO</name>
<sequence>MAQLKITQVKSYIGSKQNHRDTLRSLGLKGINTQVVKEDRPEFRGMVHTVRHLVTVEEVD</sequence>
<dbReference type="EMBL" id="X83011">
    <property type="protein sequence ID" value="CAA58134.1"/>
    <property type="molecule type" value="Genomic_DNA"/>
</dbReference>
<dbReference type="EMBL" id="AL939121">
    <property type="protein sequence ID" value="CAB82088.1"/>
    <property type="molecule type" value="Genomic_DNA"/>
</dbReference>
<dbReference type="PIR" id="S50004">
    <property type="entry name" value="S50004"/>
</dbReference>
<dbReference type="RefSeq" id="NP_628879.1">
    <property type="nucleotide sequence ID" value="NC_003888.3"/>
</dbReference>
<dbReference type="RefSeq" id="WP_003974250.1">
    <property type="nucleotide sequence ID" value="NZ_VNID01000016.1"/>
</dbReference>
<dbReference type="SMR" id="P46789"/>
<dbReference type="FunCoup" id="P46789">
    <property type="interactions" value="87"/>
</dbReference>
<dbReference type="STRING" id="100226.gene:17762369"/>
<dbReference type="PaxDb" id="100226-SCO4720"/>
<dbReference type="GeneID" id="97462940"/>
<dbReference type="KEGG" id="sco:SCO4720"/>
<dbReference type="PATRIC" id="fig|100226.15.peg.4791"/>
<dbReference type="eggNOG" id="COG1841">
    <property type="taxonomic scope" value="Bacteria"/>
</dbReference>
<dbReference type="HOGENOM" id="CLU_131047_2_0_11"/>
<dbReference type="InParanoid" id="P46789"/>
<dbReference type="OrthoDB" id="9812790at2"/>
<dbReference type="PhylomeDB" id="P46789"/>
<dbReference type="PRO" id="PR:P46789"/>
<dbReference type="Proteomes" id="UP000001973">
    <property type="component" value="Chromosome"/>
</dbReference>
<dbReference type="GO" id="GO:0022625">
    <property type="term" value="C:cytosolic large ribosomal subunit"/>
    <property type="evidence" value="ECO:0000318"/>
    <property type="project" value="GO_Central"/>
</dbReference>
<dbReference type="GO" id="GO:0003735">
    <property type="term" value="F:structural constituent of ribosome"/>
    <property type="evidence" value="ECO:0007669"/>
    <property type="project" value="InterPro"/>
</dbReference>
<dbReference type="GO" id="GO:0006412">
    <property type="term" value="P:translation"/>
    <property type="evidence" value="ECO:0007669"/>
    <property type="project" value="UniProtKB-UniRule"/>
</dbReference>
<dbReference type="CDD" id="cd01658">
    <property type="entry name" value="Ribosomal_L30"/>
    <property type="match status" value="1"/>
</dbReference>
<dbReference type="FunFam" id="3.30.1390.20:FF:000001">
    <property type="entry name" value="50S ribosomal protein L30"/>
    <property type="match status" value="1"/>
</dbReference>
<dbReference type="Gene3D" id="3.30.1390.20">
    <property type="entry name" value="Ribosomal protein L30, ferredoxin-like fold domain"/>
    <property type="match status" value="1"/>
</dbReference>
<dbReference type="HAMAP" id="MF_01371_B">
    <property type="entry name" value="Ribosomal_uL30_B"/>
    <property type="match status" value="1"/>
</dbReference>
<dbReference type="InterPro" id="IPR036919">
    <property type="entry name" value="Ribo_uL30_ferredoxin-like_sf"/>
</dbReference>
<dbReference type="InterPro" id="IPR005996">
    <property type="entry name" value="Ribosomal_uL30_bac-type"/>
</dbReference>
<dbReference type="InterPro" id="IPR018038">
    <property type="entry name" value="Ribosomal_uL30_CS"/>
</dbReference>
<dbReference type="InterPro" id="IPR016082">
    <property type="entry name" value="Ribosomal_uL30_ferredoxin-like"/>
</dbReference>
<dbReference type="NCBIfam" id="TIGR01308">
    <property type="entry name" value="rpmD_bact"/>
    <property type="match status" value="1"/>
</dbReference>
<dbReference type="PANTHER" id="PTHR15892:SF2">
    <property type="entry name" value="LARGE RIBOSOMAL SUBUNIT PROTEIN UL30M"/>
    <property type="match status" value="1"/>
</dbReference>
<dbReference type="PANTHER" id="PTHR15892">
    <property type="entry name" value="MITOCHONDRIAL RIBOSOMAL PROTEIN L30"/>
    <property type="match status" value="1"/>
</dbReference>
<dbReference type="Pfam" id="PF00327">
    <property type="entry name" value="Ribosomal_L30"/>
    <property type="match status" value="1"/>
</dbReference>
<dbReference type="PIRSF" id="PIRSF002211">
    <property type="entry name" value="Ribosomal_L30_bac-type"/>
    <property type="match status" value="1"/>
</dbReference>
<dbReference type="SUPFAM" id="SSF55129">
    <property type="entry name" value="Ribosomal protein L30p/L7e"/>
    <property type="match status" value="1"/>
</dbReference>
<dbReference type="PROSITE" id="PS00634">
    <property type="entry name" value="RIBOSOMAL_L30"/>
    <property type="match status" value="1"/>
</dbReference>
<protein>
    <recommendedName>
        <fullName evidence="1">Large ribosomal subunit protein uL30</fullName>
    </recommendedName>
    <alternativeName>
        <fullName evidence="2">50S ribosomal protein L30</fullName>
    </alternativeName>
</protein>
<comment type="subunit">
    <text evidence="1">Part of the 50S ribosomal subunit.</text>
</comment>
<comment type="similarity">
    <text evidence="1">Belongs to the universal ribosomal protein uL30 family.</text>
</comment>
<organism>
    <name type="scientific">Streptomyces coelicolor (strain ATCC BAA-471 / A3(2) / M145)</name>
    <dbReference type="NCBI Taxonomy" id="100226"/>
    <lineage>
        <taxon>Bacteria</taxon>
        <taxon>Bacillati</taxon>
        <taxon>Actinomycetota</taxon>
        <taxon>Actinomycetes</taxon>
        <taxon>Kitasatosporales</taxon>
        <taxon>Streptomycetaceae</taxon>
        <taxon>Streptomyces</taxon>
        <taxon>Streptomyces albidoflavus group</taxon>
    </lineage>
</organism>
<accession>P46789</accession>
<evidence type="ECO:0000255" key="1">
    <source>
        <dbReference type="HAMAP-Rule" id="MF_01371"/>
    </source>
</evidence>
<evidence type="ECO:0000305" key="2"/>
<gene>
    <name evidence="1" type="primary">rpmD</name>
    <name type="ordered locus">SCO4720</name>
    <name type="ORF">SCD31.45</name>
</gene>
<reference key="1">
    <citation type="submission" date="1994-12" db="EMBL/GenBank/DDBJ databases">
        <authorList>
            <person name="Loriaux A."/>
            <person name="Brans A."/>
            <person name="Dusart J."/>
        </authorList>
    </citation>
    <scope>NUCLEOTIDE SEQUENCE [GENOMIC DNA]</scope>
    <source>
        <strain>A3(2) / NRRL B-16638</strain>
    </source>
</reference>
<reference key="2">
    <citation type="journal article" date="2002" name="Nature">
        <title>Complete genome sequence of the model actinomycete Streptomyces coelicolor A3(2).</title>
        <authorList>
            <person name="Bentley S.D."/>
            <person name="Chater K.F."/>
            <person name="Cerdeno-Tarraga A.-M."/>
            <person name="Challis G.L."/>
            <person name="Thomson N.R."/>
            <person name="James K.D."/>
            <person name="Harris D.E."/>
            <person name="Quail M.A."/>
            <person name="Kieser H."/>
            <person name="Harper D."/>
            <person name="Bateman A."/>
            <person name="Brown S."/>
            <person name="Chandra G."/>
            <person name="Chen C.W."/>
            <person name="Collins M."/>
            <person name="Cronin A."/>
            <person name="Fraser A."/>
            <person name="Goble A."/>
            <person name="Hidalgo J."/>
            <person name="Hornsby T."/>
            <person name="Howarth S."/>
            <person name="Huang C.-H."/>
            <person name="Kieser T."/>
            <person name="Larke L."/>
            <person name="Murphy L.D."/>
            <person name="Oliver K."/>
            <person name="O'Neil S."/>
            <person name="Rabbinowitsch E."/>
            <person name="Rajandream M.A."/>
            <person name="Rutherford K.M."/>
            <person name="Rutter S."/>
            <person name="Seeger K."/>
            <person name="Saunders D."/>
            <person name="Sharp S."/>
            <person name="Squares R."/>
            <person name="Squares S."/>
            <person name="Taylor K."/>
            <person name="Warren T."/>
            <person name="Wietzorrek A."/>
            <person name="Woodward J.R."/>
            <person name="Barrell B.G."/>
            <person name="Parkhill J."/>
            <person name="Hopwood D.A."/>
        </authorList>
    </citation>
    <scope>NUCLEOTIDE SEQUENCE [LARGE SCALE GENOMIC DNA]</scope>
    <source>
        <strain>ATCC BAA-471 / A3(2) / M145</strain>
    </source>
</reference>